<accession>Q8NCN4</accession>
<accession>Q6N015</accession>
<protein>
    <recommendedName>
        <fullName>E3 ubiquitin-protein ligase RNF169</fullName>
        <ecNumber>2.3.2.27</ecNumber>
    </recommendedName>
    <alternativeName>
        <fullName>RING finger protein 169</fullName>
    </alternativeName>
    <alternativeName>
        <fullName evidence="9">RING-type E3 ubiquitin transferase RNF169</fullName>
    </alternativeName>
</protein>
<reference key="1">
    <citation type="journal article" date="2002" name="DNA Res.">
        <title>Characterization of size-fractionated cDNA libraries generated by the in vitro recombination-assisted method.</title>
        <authorList>
            <person name="Ohara O."/>
            <person name="Nagase T."/>
            <person name="Mitsui G."/>
            <person name="Kohga H."/>
            <person name="Kikuno R."/>
            <person name="Hiraoka S."/>
            <person name="Takahashi Y."/>
            <person name="Kitajima S."/>
            <person name="Saga Y."/>
            <person name="Koseki H."/>
        </authorList>
    </citation>
    <scope>NUCLEOTIDE SEQUENCE [LARGE SCALE MRNA]</scope>
    <source>
        <tissue>Brain</tissue>
    </source>
</reference>
<reference key="2">
    <citation type="journal article" date="2007" name="BMC Genomics">
        <title>The full-ORF clone resource of the German cDNA consortium.</title>
        <authorList>
            <person name="Bechtel S."/>
            <person name="Rosenfelder H."/>
            <person name="Duda A."/>
            <person name="Schmidt C.P."/>
            <person name="Ernst U."/>
            <person name="Wellenreuther R."/>
            <person name="Mehrle A."/>
            <person name="Schuster C."/>
            <person name="Bahr A."/>
            <person name="Bloecker H."/>
            <person name="Heubner D."/>
            <person name="Hoerlein A."/>
            <person name="Michel G."/>
            <person name="Wedler H."/>
            <person name="Koehrer K."/>
            <person name="Ottenwaelder B."/>
            <person name="Poustka A."/>
            <person name="Wiemann S."/>
            <person name="Schupp I."/>
        </authorList>
    </citation>
    <scope>NUCLEOTIDE SEQUENCE [LARGE SCALE MRNA] OF 362-708</scope>
    <source>
        <tissue>Uterus</tissue>
    </source>
</reference>
<reference key="3">
    <citation type="journal article" date="2008" name="Mol. Cell">
        <title>Kinase-selective enrichment enables quantitative phosphoproteomics of the kinome across the cell cycle.</title>
        <authorList>
            <person name="Daub H."/>
            <person name="Olsen J.V."/>
            <person name="Bairlein M."/>
            <person name="Gnad F."/>
            <person name="Oppermann F.S."/>
            <person name="Korner R."/>
            <person name="Greff Z."/>
            <person name="Keri G."/>
            <person name="Stemmann O."/>
            <person name="Mann M."/>
        </authorList>
    </citation>
    <scope>PHOSPHORYLATION [LARGE SCALE ANALYSIS] AT SER-403 AND SER-485</scope>
    <scope>IDENTIFICATION BY MASS SPECTROMETRY [LARGE SCALE ANALYSIS]</scope>
    <source>
        <tissue>Cervix carcinoma</tissue>
    </source>
</reference>
<reference key="4">
    <citation type="journal article" date="2008" name="Proc. Natl. Acad. Sci. U.S.A.">
        <title>A quantitative atlas of mitotic phosphorylation.</title>
        <authorList>
            <person name="Dephoure N."/>
            <person name="Zhou C."/>
            <person name="Villen J."/>
            <person name="Beausoleil S.A."/>
            <person name="Bakalarski C.E."/>
            <person name="Elledge S.J."/>
            <person name="Gygi S.P."/>
        </authorList>
    </citation>
    <scope>PHOSPHORYLATION [LARGE SCALE ANALYSIS] AT SER-247; SER-249; THR-554 AND SER-693</scope>
    <scope>IDENTIFICATION BY MASS SPECTROMETRY [LARGE SCALE ANALYSIS]</scope>
    <source>
        <tissue>Cervix carcinoma</tissue>
    </source>
</reference>
<reference key="5">
    <citation type="journal article" date="2009" name="Anal. Chem.">
        <title>Lys-N and trypsin cover complementary parts of the phosphoproteome in a refined SCX-based approach.</title>
        <authorList>
            <person name="Gauci S."/>
            <person name="Helbig A.O."/>
            <person name="Slijper M."/>
            <person name="Krijgsveld J."/>
            <person name="Heck A.J."/>
            <person name="Mohammed S."/>
        </authorList>
    </citation>
    <scope>IDENTIFICATION BY MASS SPECTROMETRY [LARGE SCALE ANALYSIS]</scope>
</reference>
<reference key="6">
    <citation type="journal article" date="2009" name="Sci. Signal.">
        <title>Quantitative phosphoproteomic analysis of T cell receptor signaling reveals system-wide modulation of protein-protein interactions.</title>
        <authorList>
            <person name="Mayya V."/>
            <person name="Lundgren D.H."/>
            <person name="Hwang S.-I."/>
            <person name="Rezaul K."/>
            <person name="Wu L."/>
            <person name="Eng J.K."/>
            <person name="Rodionov V."/>
            <person name="Han D.K."/>
        </authorList>
    </citation>
    <scope>PHOSPHORYLATION [LARGE SCALE ANALYSIS] AT SER-403 AND THR-554</scope>
    <scope>IDENTIFICATION BY MASS SPECTROMETRY [LARGE SCALE ANALYSIS]</scope>
    <source>
        <tissue>Leukemic T-cell</tissue>
    </source>
</reference>
<reference key="7">
    <citation type="journal article" date="2010" name="Sci. Signal.">
        <title>Quantitative phosphoproteomics reveals widespread full phosphorylation site occupancy during mitosis.</title>
        <authorList>
            <person name="Olsen J.V."/>
            <person name="Vermeulen M."/>
            <person name="Santamaria A."/>
            <person name="Kumar C."/>
            <person name="Miller M.L."/>
            <person name="Jensen L.J."/>
            <person name="Gnad F."/>
            <person name="Cox J."/>
            <person name="Jensen T.S."/>
            <person name="Nigg E.A."/>
            <person name="Brunak S."/>
            <person name="Mann M."/>
        </authorList>
    </citation>
    <scope>PHOSPHORYLATION [LARGE SCALE ANALYSIS] AT SER-403; SER-409 AND THR-410</scope>
    <scope>IDENTIFICATION BY MASS SPECTROMETRY [LARGE SCALE ANALYSIS]</scope>
    <source>
        <tissue>Cervix carcinoma</tissue>
    </source>
</reference>
<reference key="8">
    <citation type="journal article" date="2012" name="J. Biol. Chem.">
        <title>Ring finger protein RNF169 antagonises the ubiquitin-dependent signaling cascade at sites of DNA Damage.</title>
        <authorList>
            <person name="Chen J."/>
            <person name="Feng W."/>
            <person name="Jiang J."/>
            <person name="Deng Y."/>
            <person name="Huen M.S."/>
        </authorList>
    </citation>
    <scope>FUNCTION</scope>
    <scope>MIU MOTIF</scope>
    <scope>UBIQUITIN-BINDING</scope>
    <scope>SUBCELLULAR LOCATION</scope>
</reference>
<reference key="9">
    <citation type="journal article" date="2012" name="J. Cell Biol.">
        <title>Human RNF169 is a negative regulator of the ubiquitin-dependent response to DNA double-strand breaks.</title>
        <authorList>
            <person name="Poulsen M."/>
            <person name="Lukas C."/>
            <person name="Lukas J."/>
            <person name="Bekker-Jensen S."/>
            <person name="Mailand N."/>
        </authorList>
    </citation>
    <scope>FUNCTION</scope>
    <scope>MIU MOTIF</scope>
    <scope>UBIQUITIN-BINDING</scope>
    <scope>SUBCELLULAR LOCATION</scope>
</reference>
<reference key="10">
    <citation type="journal article" date="2012" name="Mol. Cell">
        <title>Tandem protein interaction modules organize the ubiquitin-dependent response to DNA double-strand breaks.</title>
        <authorList>
            <person name="Panier S."/>
            <person name="Ichijima Y."/>
            <person name="Fradet-Turcotte A."/>
            <person name="Leung C.C."/>
            <person name="Kaustov L."/>
            <person name="Arrowsmith C.H."/>
            <person name="Durocher D."/>
        </authorList>
    </citation>
    <scope>FUNCTION</scope>
    <scope>UBIQUITIN-BINDING</scope>
    <scope>LR MOTIF</scope>
    <scope>SUBCELLULAR LOCATION</scope>
    <scope>MUTAGENESIS OF CYS-68; ALA-673; ARG-689; LYS-691; TYR-697 AND 699-LEU-ARG-700</scope>
</reference>
<reference key="11">
    <citation type="journal article" date="2013" name="J. Proteome Res.">
        <title>Toward a comprehensive characterization of a human cancer cell phosphoproteome.</title>
        <authorList>
            <person name="Zhou H."/>
            <person name="Di Palma S."/>
            <person name="Preisinger C."/>
            <person name="Peng M."/>
            <person name="Polat A.N."/>
            <person name="Heck A.J."/>
            <person name="Mohammed S."/>
        </authorList>
    </citation>
    <scope>PHOSPHORYLATION [LARGE SCALE ANALYSIS] AT SER-12; SER-247; SER-339; SER-644 AND SER-693</scope>
    <scope>IDENTIFICATION BY MASS SPECTROMETRY [LARGE SCALE ANALYSIS]</scope>
    <source>
        <tissue>Cervix carcinoma</tissue>
        <tissue>Erythroleukemia</tissue>
    </source>
</reference>
<reference key="12">
    <citation type="journal article" date="2014" name="J. Proteomics">
        <title>An enzyme assisted RP-RPLC approach for in-depth analysis of human liver phosphoproteome.</title>
        <authorList>
            <person name="Bian Y."/>
            <person name="Song C."/>
            <person name="Cheng K."/>
            <person name="Dong M."/>
            <person name="Wang F."/>
            <person name="Huang J."/>
            <person name="Sun D."/>
            <person name="Wang L."/>
            <person name="Ye M."/>
            <person name="Zou H."/>
        </authorList>
    </citation>
    <scope>PHOSPHORYLATION [LARGE SCALE ANALYSIS] AT SER-403</scope>
    <scope>IDENTIFICATION BY MASS SPECTROMETRY [LARGE SCALE ANALYSIS]</scope>
    <source>
        <tissue>Liver</tissue>
    </source>
</reference>
<reference key="13">
    <citation type="journal article" date="2017" name="Nat. Struct. Mol. Biol.">
        <title>Site-specific mapping of the human SUMO proteome reveals co-modification with phosphorylation.</title>
        <authorList>
            <person name="Hendriks I.A."/>
            <person name="Lyon D."/>
            <person name="Young C."/>
            <person name="Jensen L.J."/>
            <person name="Vertegaal A.C."/>
            <person name="Nielsen M.L."/>
        </authorList>
    </citation>
    <scope>SUMOYLATION [LARGE SCALE ANALYSIS] AT LYS-286; LYS-362 AND LYS-511</scope>
    <scope>IDENTIFICATION BY MASS SPECTROMETRY [LARGE SCALE ANALYSIS]</scope>
</reference>
<reference key="14">
    <citation type="journal article" date="2018" name="Proc. Natl. Acad. Sci. U.S.A.">
        <title>RNF169 limits 53BP1 deposition at DSBs to stimulate single-strand annealing repair.</title>
        <authorList>
            <person name="An L."/>
            <person name="Dong C."/>
            <person name="Li J."/>
            <person name="Chen J."/>
            <person name="Yuan J."/>
            <person name="Huang J."/>
            <person name="Chan K.M."/>
            <person name="Yu C.H."/>
            <person name="Huen M.S.Y."/>
        </authorList>
    </citation>
    <scope>FUNCTION</scope>
    <scope>SUBCELLULAR LOCATION</scope>
</reference>
<reference key="15">
    <citation type="journal article" date="2019" name="Cell Cycle">
        <title>DYRK1A regulates the recruitment of 53BP1 to the sites of DNA damage in part through interaction with RNF169.</title>
        <authorList>
            <person name="Menon V.R."/>
            <person name="Ananthapadmanabhan V."/>
            <person name="Swanson S."/>
            <person name="Saini S."/>
            <person name="Sesay F."/>
            <person name="Yakovlev V."/>
            <person name="Florens L."/>
            <person name="DeCaprio J.A."/>
            <person name="Washburn M.P."/>
            <person name="Dozmorov M."/>
            <person name="Litovchick L."/>
        </authorList>
    </citation>
    <scope>FUNCTION</scope>
    <scope>PHOSPHORYLATION AT SER-368 AND SER-403</scope>
    <scope>SUBCELLULAR LOCATION</scope>
    <scope>MUTAGENESIS OF SER-368 AND SER-403</scope>
</reference>
<reference key="16">
    <citation type="journal article" date="2021" name="Nucleic Acids Res.">
        <title>A DYRK1B-dependent pathway suppresses rDNA transcription in response to DNA damage.</title>
        <authorList>
            <person name="Dong C."/>
            <person name="An L."/>
            <person name="Yu C.H."/>
            <person name="Huen M.S.Y."/>
        </authorList>
    </citation>
    <scope>INTERACTION WITH DYRK1B</scope>
</reference>
<gene>
    <name type="primary">RNF169</name>
    <name type="synonym">KIAA1991</name>
</gene>
<sequence length="708" mass="77194">MAAAGPSTRASSAAAAAALSRRGRRGRCDETAAAKTGAPGPASGPSLLVLSPPLLQPPLPPRPEESGCAGCLEPPGEAAALPCGHSLCRGCAQRAADAAGPGCPRCRARGPGWARRRARDDGQADSEVLGECARRSQPERCRPRRDGGAAAAGPRPEQEPRAAPAEPDFIFRAPIKLSKPGELREEYESLRKLREEKLQEEKPSEDQIHKLLPEDTETGKRKMDEQKKRDEPLVLKTNLERCPARLSDSENEEPSRGQMTQTHRSAFVSKNNSYSLAFLAGKLNSKVERSQSCSDTAQERAKSRVRAVPGNKAKVTTMTPASNPIIGVLLSTQNNRCVSAPDLTIEKRLPFSSLSSLASLHKPERSVSPESNDSISEELNHFKPIVCSPCTPPKRLPDGRVLSPLIIKSTPRNLNRSLQKQTSYEASPRILKKWEQIFQERQIKKTLSKATLTSLAPEMGEELLGSEGIHSSKEKPLVAVNTRLSGGQVLSEYTGPTSADLDHFPSVSQTKAEQDSDNKSSTEIPLETCCSSELKGGGSGTSLEREQFEGLGSTPDAKLDKTCISRAMKITTVNSVLPQNSVLGGVLKTKQQLKTLNHFDLTNGVLVESLSEEPLPSLRRGRKRHCKTKHLEQNGSLKKLRQTSGEVGLAPTDPVLREMEQKLQQEEEDRQLALQLQRMFDNERRTVSRRKGSVDQYLLRSSNMAGAK</sequence>
<comment type="function">
    <text evidence="3 4 5 6 7">Probable E3 ubiquitin-protein ligase that acts as a regulator of double-strand breaks (DSBs) repair following DNA damage. Functions in a non-canonical fashion to harness RNF168-mediated protein recruitment to DSB-containing chromatin, thereby contributing to regulation of DSB repair pathway utilization (PubMed:22492721, PubMed:30773093). Once recruited to DSB repair sites by recognizing and binding ubiquitin catalyzed by RNF168, competes with TP53BP1 and BRCA1 for association with RNF168-modified chromatin, thereby favouring homologous recombination repair (HRR) and single-strand annealing (SSA) instead of non-homologous end joining (NHEJ) mediated by TP53BP1 (PubMed:30104380, PubMed:30773093). E3 ubiquitin-protein ligase activity is not required for regulation of DSBs repair.</text>
</comment>
<comment type="catalytic activity">
    <reaction>
        <text>S-ubiquitinyl-[E2 ubiquitin-conjugating enzyme]-L-cysteine + [acceptor protein]-L-lysine = [E2 ubiquitin-conjugating enzyme]-L-cysteine + N(6)-ubiquitinyl-[acceptor protein]-L-lysine.</text>
        <dbReference type="EC" id="2.3.2.27"/>
    </reaction>
</comment>
<comment type="pathway">
    <text>Protein modification; protein ubiquitination.</text>
</comment>
<comment type="subunit">
    <text evidence="8">Interacts with DYRK1B.</text>
</comment>
<comment type="interaction">
    <interactant intactId="EBI-6380946">
        <id>Q8NCN4</id>
    </interactant>
    <interactant intactId="EBI-739624">
        <id>Q8NHQ1</id>
        <label>CEP70</label>
    </interactant>
    <organismsDiffer>false</organismsDiffer>
    <experiments>3</experiments>
</comment>
<comment type="interaction">
    <interactant intactId="EBI-6380946">
        <id>Q8NCN4</id>
    </interactant>
    <interactant intactId="EBI-618309">
        <id>Q08379</id>
        <label>GOLGA2</label>
    </interactant>
    <organismsDiffer>false</organismsDiffer>
    <experiments>3</experiments>
</comment>
<comment type="interaction">
    <interactant intactId="EBI-6380946">
        <id>Q8NCN4</id>
    </interactant>
    <interactant intactId="EBI-10961706">
        <id>Q96ED9-2</id>
        <label>HOOK2</label>
    </interactant>
    <organismsDiffer>false</organismsDiffer>
    <experiments>3</experiments>
</comment>
<comment type="interaction">
    <interactant intactId="EBI-6380946">
        <id>Q8NCN4</id>
    </interactant>
    <interactant intactId="EBI-7116203">
        <id>O75031</id>
        <label>HSF2BP</label>
    </interactant>
    <organismsDiffer>false</organismsDiffer>
    <experiments>3</experiments>
</comment>
<comment type="interaction">
    <interactant intactId="EBI-6380946">
        <id>Q8NCN4</id>
    </interactant>
    <interactant intactId="EBI-14066006">
        <id>Q4G0R1</id>
        <label>PIBF1</label>
    </interactant>
    <organismsDiffer>false</organismsDiffer>
    <experiments>3</experiments>
</comment>
<comment type="subcellular location">
    <subcellularLocation>
        <location evidence="6 7">Chromosome</location>
    </subcellularLocation>
    <subcellularLocation>
        <location evidence="3 4 5">Nucleus</location>
        <location evidence="3 4 5">Nucleoplasm</location>
    </subcellularLocation>
    <text evidence="6">Localizes to sites of double-strand breaks (DSBs) following DNA damage. Recruited to DSBs via recognition of RNF168-dependent ubiquitin products.</text>
</comment>
<comment type="domain">
    <text evidence="5">The MIU motif (motif interacting with ubiquitin) mediates the interaction with both 'Lys-48'- and 'Lys-63'-linked ubiquitin chains (PubMed:22492721, PubMed:22733822). The UMI motif also mediates interaction with ubiquitin. The specificity for different types of ubiquitin is mediated by juxtaposition of ubiquitin-binding motifs (MIU and UMI motifs) with LR motifs (LRMs) (PubMed:22742833).</text>
</comment>
<comment type="PTM">
    <text evidence="8">Phosphorylated by DYRK1A; phosphorylation increases RNF169 ability to block accumulation of TP53BP1 at the DSB sites.</text>
</comment>
<comment type="similarity">
    <text evidence="9">Belongs to the RNF169 family.</text>
</comment>
<comment type="sequence caution" evidence="9">
    <conflict type="erroneous initiation">
        <sequence resource="EMBL-CDS" id="BAC02700"/>
    </conflict>
</comment>
<organism>
    <name type="scientific">Homo sapiens</name>
    <name type="common">Human</name>
    <dbReference type="NCBI Taxonomy" id="9606"/>
    <lineage>
        <taxon>Eukaryota</taxon>
        <taxon>Metazoa</taxon>
        <taxon>Chordata</taxon>
        <taxon>Craniata</taxon>
        <taxon>Vertebrata</taxon>
        <taxon>Euteleostomi</taxon>
        <taxon>Mammalia</taxon>
        <taxon>Eutheria</taxon>
        <taxon>Euarchontoglires</taxon>
        <taxon>Primates</taxon>
        <taxon>Haplorrhini</taxon>
        <taxon>Catarrhini</taxon>
        <taxon>Hominidae</taxon>
        <taxon>Homo</taxon>
    </lineage>
</organism>
<dbReference type="EC" id="2.3.2.27"/>
<dbReference type="EMBL" id="AB082522">
    <property type="protein sequence ID" value="BAC02700.1"/>
    <property type="status" value="ALT_INIT"/>
    <property type="molecule type" value="mRNA"/>
</dbReference>
<dbReference type="EMBL" id="BX640750">
    <property type="protein sequence ID" value="CAE45858.1"/>
    <property type="molecule type" value="mRNA"/>
</dbReference>
<dbReference type="CCDS" id="CCDS41691.1"/>
<dbReference type="RefSeq" id="NP_001092108.1">
    <property type="nucleotide sequence ID" value="NM_001098638.2"/>
</dbReference>
<dbReference type="PDB" id="5GG4">
    <property type="method" value="X-ray"/>
    <property type="resolution" value="3.11 A"/>
    <property type="chains" value="E/F/G/H=620-632"/>
</dbReference>
<dbReference type="PDB" id="5VEY">
    <property type="method" value="NMR"/>
    <property type="chains" value="C=653-708"/>
</dbReference>
<dbReference type="PDBsum" id="5GG4"/>
<dbReference type="PDBsum" id="5VEY"/>
<dbReference type="SMR" id="Q8NCN4"/>
<dbReference type="BioGRID" id="129022">
    <property type="interactions" value="76"/>
</dbReference>
<dbReference type="FunCoup" id="Q8NCN4">
    <property type="interactions" value="3068"/>
</dbReference>
<dbReference type="IntAct" id="Q8NCN4">
    <property type="interactions" value="71"/>
</dbReference>
<dbReference type="MINT" id="Q8NCN4"/>
<dbReference type="STRING" id="9606.ENSP00000299563"/>
<dbReference type="GlyGen" id="Q8NCN4">
    <property type="glycosylation" value="2 sites, 1 O-linked glycan (1 site)"/>
</dbReference>
<dbReference type="iPTMnet" id="Q8NCN4"/>
<dbReference type="PhosphoSitePlus" id="Q8NCN4"/>
<dbReference type="BioMuta" id="RNF169"/>
<dbReference type="DMDM" id="110287945"/>
<dbReference type="jPOST" id="Q8NCN4"/>
<dbReference type="MassIVE" id="Q8NCN4"/>
<dbReference type="PaxDb" id="9606-ENSP00000299563"/>
<dbReference type="PeptideAtlas" id="Q8NCN4"/>
<dbReference type="ProteomicsDB" id="72913"/>
<dbReference type="Pumba" id="Q8NCN4"/>
<dbReference type="Antibodypedia" id="31103">
    <property type="antibodies" value="80 antibodies from 19 providers"/>
</dbReference>
<dbReference type="DNASU" id="254225"/>
<dbReference type="Ensembl" id="ENST00000299563.5">
    <property type="protein sequence ID" value="ENSP00000299563.4"/>
    <property type="gene ID" value="ENSG00000166439.6"/>
</dbReference>
<dbReference type="GeneID" id="254225"/>
<dbReference type="KEGG" id="hsa:254225"/>
<dbReference type="MANE-Select" id="ENST00000299563.5">
    <property type="protein sequence ID" value="ENSP00000299563.4"/>
    <property type="RefSeq nucleotide sequence ID" value="NM_001098638.2"/>
    <property type="RefSeq protein sequence ID" value="NP_001092108.1"/>
</dbReference>
<dbReference type="UCSC" id="uc001ovl.4">
    <property type="organism name" value="human"/>
</dbReference>
<dbReference type="AGR" id="HGNC:26961"/>
<dbReference type="CTD" id="254225"/>
<dbReference type="DisGeNET" id="254225"/>
<dbReference type="GeneCards" id="RNF169"/>
<dbReference type="HGNC" id="HGNC:26961">
    <property type="gene designation" value="RNF169"/>
</dbReference>
<dbReference type="HPA" id="ENSG00000166439">
    <property type="expression patterns" value="Low tissue specificity"/>
</dbReference>
<dbReference type="MIM" id="618650">
    <property type="type" value="gene"/>
</dbReference>
<dbReference type="neXtProt" id="NX_Q8NCN4"/>
<dbReference type="OpenTargets" id="ENSG00000166439"/>
<dbReference type="PharmGKB" id="PA142671054"/>
<dbReference type="VEuPathDB" id="HostDB:ENSG00000166439"/>
<dbReference type="eggNOG" id="KOG4159">
    <property type="taxonomic scope" value="Eukaryota"/>
</dbReference>
<dbReference type="GeneTree" id="ENSGT00940000153680"/>
<dbReference type="HOGENOM" id="CLU_024691_1_0_1"/>
<dbReference type="InParanoid" id="Q8NCN4"/>
<dbReference type="OMA" id="EFIFRAP"/>
<dbReference type="OrthoDB" id="8959987at2759"/>
<dbReference type="PAN-GO" id="Q8NCN4">
    <property type="GO annotations" value="5 GO annotations based on evolutionary models"/>
</dbReference>
<dbReference type="PhylomeDB" id="Q8NCN4"/>
<dbReference type="TreeFam" id="TF332796"/>
<dbReference type="PathwayCommons" id="Q8NCN4"/>
<dbReference type="SignaLink" id="Q8NCN4"/>
<dbReference type="SIGNOR" id="Q8NCN4"/>
<dbReference type="UniPathway" id="UPA00143"/>
<dbReference type="BioGRID-ORCS" id="254225">
    <property type="hits" value="13 hits in 1201 CRISPR screens"/>
</dbReference>
<dbReference type="ChiTaRS" id="RNF169">
    <property type="organism name" value="human"/>
</dbReference>
<dbReference type="GenomeRNAi" id="254225"/>
<dbReference type="Pharos" id="Q8NCN4">
    <property type="development level" value="Tbio"/>
</dbReference>
<dbReference type="PRO" id="PR:Q8NCN4"/>
<dbReference type="Proteomes" id="UP000005640">
    <property type="component" value="Chromosome 11"/>
</dbReference>
<dbReference type="RNAct" id="Q8NCN4">
    <property type="molecule type" value="protein"/>
</dbReference>
<dbReference type="Bgee" id="ENSG00000166439">
    <property type="expression patterns" value="Expressed in epithelial cell of pancreas and 191 other cell types or tissues"/>
</dbReference>
<dbReference type="ExpressionAtlas" id="Q8NCN4">
    <property type="expression patterns" value="baseline and differential"/>
</dbReference>
<dbReference type="GO" id="GO:0005829">
    <property type="term" value="C:cytosol"/>
    <property type="evidence" value="ECO:0000314"/>
    <property type="project" value="HPA"/>
</dbReference>
<dbReference type="GO" id="GO:0016604">
    <property type="term" value="C:nuclear body"/>
    <property type="evidence" value="ECO:0000314"/>
    <property type="project" value="HPA"/>
</dbReference>
<dbReference type="GO" id="GO:0005730">
    <property type="term" value="C:nucleolus"/>
    <property type="evidence" value="ECO:0000314"/>
    <property type="project" value="HPA"/>
</dbReference>
<dbReference type="GO" id="GO:0005654">
    <property type="term" value="C:nucleoplasm"/>
    <property type="evidence" value="ECO:0000314"/>
    <property type="project" value="UniProtKB"/>
</dbReference>
<dbReference type="GO" id="GO:0005634">
    <property type="term" value="C:nucleus"/>
    <property type="evidence" value="ECO:0000314"/>
    <property type="project" value="UniProtKB"/>
</dbReference>
<dbReference type="GO" id="GO:0035861">
    <property type="term" value="C:site of double-strand break"/>
    <property type="evidence" value="ECO:0000314"/>
    <property type="project" value="UniProtKB"/>
</dbReference>
<dbReference type="GO" id="GO:0070530">
    <property type="term" value="F:K63-linked polyubiquitin modification-dependent protein binding"/>
    <property type="evidence" value="ECO:0000314"/>
    <property type="project" value="UniProtKB"/>
</dbReference>
<dbReference type="GO" id="GO:0031491">
    <property type="term" value="F:nucleosome binding"/>
    <property type="evidence" value="ECO:0000314"/>
    <property type="project" value="UniProtKB"/>
</dbReference>
<dbReference type="GO" id="GO:0061649">
    <property type="term" value="F:ubiquitin-modified histone reader activity"/>
    <property type="evidence" value="ECO:0000314"/>
    <property type="project" value="UniProt"/>
</dbReference>
<dbReference type="GO" id="GO:0004842">
    <property type="term" value="F:ubiquitin-protein transferase activity"/>
    <property type="evidence" value="ECO:0000318"/>
    <property type="project" value="GO_Central"/>
</dbReference>
<dbReference type="GO" id="GO:0008270">
    <property type="term" value="F:zinc ion binding"/>
    <property type="evidence" value="ECO:0007669"/>
    <property type="project" value="UniProtKB-KW"/>
</dbReference>
<dbReference type="GO" id="GO:0006974">
    <property type="term" value="P:DNA damage response"/>
    <property type="evidence" value="ECO:0000314"/>
    <property type="project" value="UniProtKB"/>
</dbReference>
<dbReference type="GO" id="GO:0006302">
    <property type="term" value="P:double-strand break repair"/>
    <property type="evidence" value="ECO:0000318"/>
    <property type="project" value="GO_Central"/>
</dbReference>
<dbReference type="GO" id="GO:0000724">
    <property type="term" value="P:double-strand break repair via homologous recombination"/>
    <property type="evidence" value="ECO:0000314"/>
    <property type="project" value="UniProt"/>
</dbReference>
<dbReference type="GO" id="GO:2000780">
    <property type="term" value="P:negative regulation of double-strand break repair"/>
    <property type="evidence" value="ECO:0000314"/>
    <property type="project" value="UniProtKB"/>
</dbReference>
<dbReference type="GO" id="GO:0016567">
    <property type="term" value="P:protein ubiquitination"/>
    <property type="evidence" value="ECO:0007669"/>
    <property type="project" value="UniProtKB-UniPathway"/>
</dbReference>
<dbReference type="CDD" id="cd21951">
    <property type="entry name" value="MIU_RNF169_C"/>
    <property type="match status" value="1"/>
</dbReference>
<dbReference type="CDD" id="cd16551">
    <property type="entry name" value="RING-HC_RNF169"/>
    <property type="match status" value="1"/>
</dbReference>
<dbReference type="CDD" id="cd22264">
    <property type="entry name" value="UDM1_RNF169"/>
    <property type="match status" value="1"/>
</dbReference>
<dbReference type="FunFam" id="3.30.40.10:FF:000676">
    <property type="entry name" value="E3 ubiquitin-protein ligase RNF169"/>
    <property type="match status" value="1"/>
</dbReference>
<dbReference type="Gene3D" id="3.30.40.10">
    <property type="entry name" value="Zinc/RING finger domain, C3HC4 (zinc finger)"/>
    <property type="match status" value="1"/>
</dbReference>
<dbReference type="InterPro" id="IPR051657">
    <property type="entry name" value="RNF168/RNF169_E3_ubiq-ligase"/>
</dbReference>
<dbReference type="InterPro" id="IPR001841">
    <property type="entry name" value="Znf_RING"/>
</dbReference>
<dbReference type="InterPro" id="IPR013083">
    <property type="entry name" value="Znf_RING/FYVE/PHD"/>
</dbReference>
<dbReference type="InterPro" id="IPR017907">
    <property type="entry name" value="Znf_RING_CS"/>
</dbReference>
<dbReference type="PANTHER" id="PTHR23328:SF2">
    <property type="entry name" value="E3 UBIQUITIN-PROTEIN LIGASE RNF169"/>
    <property type="match status" value="1"/>
</dbReference>
<dbReference type="PANTHER" id="PTHR23328">
    <property type="entry name" value="RING-TYPE DOMAIN-CONTAINING PROTEIN"/>
    <property type="match status" value="1"/>
</dbReference>
<dbReference type="Pfam" id="PF13920">
    <property type="entry name" value="zf-C3HC4_3"/>
    <property type="match status" value="1"/>
</dbReference>
<dbReference type="SMART" id="SM00184">
    <property type="entry name" value="RING"/>
    <property type="match status" value="1"/>
</dbReference>
<dbReference type="SUPFAM" id="SSF57850">
    <property type="entry name" value="RING/U-box"/>
    <property type="match status" value="1"/>
</dbReference>
<dbReference type="PROSITE" id="PS00518">
    <property type="entry name" value="ZF_RING_1"/>
    <property type="match status" value="1"/>
</dbReference>
<dbReference type="PROSITE" id="PS50089">
    <property type="entry name" value="ZF_RING_2"/>
    <property type="match status" value="1"/>
</dbReference>
<keyword id="KW-0002">3D-structure</keyword>
<keyword id="KW-0158">Chromosome</keyword>
<keyword id="KW-0227">DNA damage</keyword>
<keyword id="KW-0234">DNA repair</keyword>
<keyword id="KW-1017">Isopeptide bond</keyword>
<keyword id="KW-0479">Metal-binding</keyword>
<keyword id="KW-0539">Nucleus</keyword>
<keyword id="KW-0597">Phosphoprotein</keyword>
<keyword id="KW-1267">Proteomics identification</keyword>
<keyword id="KW-1185">Reference proteome</keyword>
<keyword id="KW-0808">Transferase</keyword>
<keyword id="KW-0832">Ubl conjugation</keyword>
<keyword id="KW-0833">Ubl conjugation pathway</keyword>
<keyword id="KW-0862">Zinc</keyword>
<keyword id="KW-0863">Zinc-finger</keyword>
<name>RN169_HUMAN</name>
<feature type="chain" id="PRO_0000245598" description="E3 ubiquitin-protein ligase RNF169">
    <location>
        <begin position="1"/>
        <end position="708"/>
    </location>
</feature>
<feature type="zinc finger region" description="RING-type" evidence="1">
    <location>
        <begin position="68"/>
        <end position="107"/>
    </location>
</feature>
<feature type="region of interest" description="Disordered" evidence="2">
    <location>
        <begin position="1"/>
        <end position="71"/>
    </location>
</feature>
<feature type="region of interest" description="Disordered" evidence="2">
    <location>
        <begin position="96"/>
        <end position="169"/>
    </location>
</feature>
<feature type="region of interest" description="Disordered" evidence="2">
    <location>
        <begin position="195"/>
        <end position="262"/>
    </location>
</feature>
<feature type="region of interest" description="Disordered" evidence="2">
    <location>
        <begin position="491"/>
        <end position="555"/>
    </location>
</feature>
<feature type="short sequence motif" description="UMI motif">
    <location>
        <begin position="205"/>
        <end position="213"/>
    </location>
</feature>
<feature type="short sequence motif" description="MIU motif">
    <location>
        <begin position="665"/>
        <end position="682"/>
    </location>
</feature>
<feature type="short sequence motif" description="LR motif">
    <location>
        <begin position="689"/>
        <end position="701"/>
    </location>
</feature>
<feature type="compositionally biased region" description="Low complexity" evidence="2">
    <location>
        <begin position="1"/>
        <end position="20"/>
    </location>
</feature>
<feature type="compositionally biased region" description="Low complexity" evidence="2">
    <location>
        <begin position="33"/>
        <end position="53"/>
    </location>
</feature>
<feature type="compositionally biased region" description="Basic and acidic residues" evidence="2">
    <location>
        <begin position="132"/>
        <end position="147"/>
    </location>
</feature>
<feature type="compositionally biased region" description="Low complexity" evidence="2">
    <location>
        <begin position="148"/>
        <end position="167"/>
    </location>
</feature>
<feature type="compositionally biased region" description="Basic and acidic residues" evidence="2">
    <location>
        <begin position="195"/>
        <end position="243"/>
    </location>
</feature>
<feature type="modified residue" description="Phosphoserine" evidence="14">
    <location>
        <position position="12"/>
    </location>
</feature>
<feature type="modified residue" description="Phosphoserine" evidence="10 14">
    <location>
        <position position="247"/>
    </location>
</feature>
<feature type="modified residue" description="Phosphoserine" evidence="10">
    <location>
        <position position="249"/>
    </location>
</feature>
<feature type="modified residue" description="Phosphoserine" evidence="14">
    <location>
        <position position="339"/>
    </location>
</feature>
<feature type="modified residue" description="Phosphoserine" evidence="7 14">
    <location>
        <position position="368"/>
    </location>
</feature>
<feature type="modified residue" description="Phosphoserine" evidence="7 11 12 13 15">
    <location>
        <position position="403"/>
    </location>
</feature>
<feature type="modified residue" description="Phosphoserine" evidence="13">
    <location>
        <position position="409"/>
    </location>
</feature>
<feature type="modified residue" description="Phosphothreonine" evidence="13">
    <location>
        <position position="410"/>
    </location>
</feature>
<feature type="modified residue" description="Phosphoserine" evidence="11">
    <location>
        <position position="485"/>
    </location>
</feature>
<feature type="modified residue" description="Phosphothreonine" evidence="10 12">
    <location>
        <position position="554"/>
    </location>
</feature>
<feature type="modified residue" description="Phosphoserine" evidence="14">
    <location>
        <position position="644"/>
    </location>
</feature>
<feature type="modified residue" description="Phosphoserine" evidence="10 14">
    <location>
        <position position="693"/>
    </location>
</feature>
<feature type="cross-link" description="Glycyl lysine isopeptide (Lys-Gly) (interchain with G-Cter in SUMO2)" evidence="16">
    <location>
        <position position="286"/>
    </location>
</feature>
<feature type="cross-link" description="Glycyl lysine isopeptide (Lys-Gly) (interchain with G-Cter in SUMO2)" evidence="16">
    <location>
        <position position="362"/>
    </location>
</feature>
<feature type="cross-link" description="Glycyl lysine isopeptide (Lys-Gly) (interchain with G-Cter in SUMO2)" evidence="16">
    <location>
        <position position="511"/>
    </location>
</feature>
<feature type="mutagenesis site" description="Does not affect recruitment to DSBs nor ability to inhibit DSBs repair." evidence="5">
    <original>C</original>
    <variation>S</variation>
    <location>
        <position position="68"/>
    </location>
</feature>
<feature type="mutagenesis site" description="About 90% loss of phosphorylation by DYRK1A; when associated with A-403." evidence="7">
    <original>S</original>
    <variation>A</variation>
    <location>
        <position position="368"/>
    </location>
</feature>
<feature type="mutagenesis site" description="About 90% loss of phosphorylation by DYRK1A; when associated with A-368." evidence="7">
    <original>S</original>
    <variation>A</variation>
    <location>
        <position position="403"/>
    </location>
</feature>
<feature type="mutagenesis site" description="Abolishes ubiquitin-binding." evidence="5">
    <original>A</original>
    <variation>G</variation>
    <location>
        <position position="673"/>
    </location>
</feature>
<feature type="mutagenesis site" description="Impairs recruitment to DSBs." evidence="5">
    <original>R</original>
    <variation>A</variation>
    <location>
        <position position="689"/>
    </location>
</feature>
<feature type="mutagenesis site" description="Impairs recruitment to DSBs." evidence="5">
    <original>K</original>
    <variation>A</variation>
    <location>
        <position position="691"/>
    </location>
</feature>
<feature type="mutagenesis site" description="Impairs recruitment to DSBs." evidence="5">
    <original>Y</original>
    <variation>A</variation>
    <location>
        <position position="697"/>
    </location>
</feature>
<feature type="mutagenesis site" description="Does not affect ubiquitin-binding but abolishes recruitment to DSBs." evidence="5">
    <original>LR</original>
    <variation>AA</variation>
    <location>
        <begin position="699"/>
        <end position="700"/>
    </location>
</feature>
<feature type="helix" evidence="17">
    <location>
        <begin position="654"/>
        <end position="683"/>
    </location>
</feature>
<evidence type="ECO:0000255" key="1">
    <source>
        <dbReference type="PROSITE-ProRule" id="PRU00175"/>
    </source>
</evidence>
<evidence type="ECO:0000256" key="2">
    <source>
        <dbReference type="SAM" id="MobiDB-lite"/>
    </source>
</evidence>
<evidence type="ECO:0000269" key="3">
    <source>
    </source>
</evidence>
<evidence type="ECO:0000269" key="4">
    <source>
    </source>
</evidence>
<evidence type="ECO:0000269" key="5">
    <source>
    </source>
</evidence>
<evidence type="ECO:0000269" key="6">
    <source>
    </source>
</evidence>
<evidence type="ECO:0000269" key="7">
    <source>
    </source>
</evidence>
<evidence type="ECO:0000269" key="8">
    <source>
    </source>
</evidence>
<evidence type="ECO:0000305" key="9"/>
<evidence type="ECO:0007744" key="10">
    <source>
    </source>
</evidence>
<evidence type="ECO:0007744" key="11">
    <source>
    </source>
</evidence>
<evidence type="ECO:0007744" key="12">
    <source>
    </source>
</evidence>
<evidence type="ECO:0007744" key="13">
    <source>
    </source>
</evidence>
<evidence type="ECO:0007744" key="14">
    <source>
    </source>
</evidence>
<evidence type="ECO:0007744" key="15">
    <source>
    </source>
</evidence>
<evidence type="ECO:0007744" key="16">
    <source>
    </source>
</evidence>
<evidence type="ECO:0007829" key="17">
    <source>
        <dbReference type="PDB" id="5VEY"/>
    </source>
</evidence>
<proteinExistence type="evidence at protein level"/>